<sequence>MFLAQEIIRKKRNGLALSAEEIQFFVKGITTNAVSEGQIAALGMAVYFNDMNMDERIALTTAMRDSGTVLNWQSLGLNGPVIDKHSTGGVGDVISLMLGPMAAACGGYVPMISGRGLGHTGGTLDKFDAIPGYQTEPSSELFRKVVKDVGVAIIGQTGDLVPADKRFYSIRDNTATVESISLITASILSKKLACSLDALAMDVKVGSGAFMPTYEASEELARSIAAVANGAGTKTTALLTDMNQVLASCAGNAVEVKEAIDFLTGAYRNPRLYAVTMGLCAEMLLLGGLATDEADARAKLNRVLDNGRAAEIFGKMVSGLGGPVDFVENYSKYLPQSQIIRPVFADTQGYAHSMDTRELGLAVVTLGGGRRKPGDALDYSVGLTQVCALGDKIDASTPIAVIHAQSEDAFAQAEEAVKKAIRIDEVAPEKTPEIYAYIRAADL</sequence>
<proteinExistence type="inferred from homology"/>
<gene>
    <name evidence="1" type="primary">deoA</name>
    <name type="ordered locus">Shewmr4_1038</name>
</gene>
<feature type="chain" id="PRO_1000069673" description="Thymidine phosphorylase">
    <location>
        <begin position="1"/>
        <end position="443"/>
    </location>
</feature>
<reference key="1">
    <citation type="submission" date="2006-08" db="EMBL/GenBank/DDBJ databases">
        <title>Complete sequence of Shewanella sp. MR-4.</title>
        <authorList>
            <consortium name="US DOE Joint Genome Institute"/>
            <person name="Copeland A."/>
            <person name="Lucas S."/>
            <person name="Lapidus A."/>
            <person name="Barry K."/>
            <person name="Detter J.C."/>
            <person name="Glavina del Rio T."/>
            <person name="Hammon N."/>
            <person name="Israni S."/>
            <person name="Dalin E."/>
            <person name="Tice H."/>
            <person name="Pitluck S."/>
            <person name="Kiss H."/>
            <person name="Brettin T."/>
            <person name="Bruce D."/>
            <person name="Han C."/>
            <person name="Tapia R."/>
            <person name="Gilna P."/>
            <person name="Schmutz J."/>
            <person name="Larimer F."/>
            <person name="Land M."/>
            <person name="Hauser L."/>
            <person name="Kyrpides N."/>
            <person name="Mikhailova N."/>
            <person name="Nealson K."/>
            <person name="Konstantinidis K."/>
            <person name="Klappenbach J."/>
            <person name="Tiedje J."/>
            <person name="Richardson P."/>
        </authorList>
    </citation>
    <scope>NUCLEOTIDE SEQUENCE [LARGE SCALE GENOMIC DNA]</scope>
    <source>
        <strain>MR-4</strain>
    </source>
</reference>
<protein>
    <recommendedName>
        <fullName evidence="1">Thymidine phosphorylase</fullName>
        <ecNumber evidence="1">2.4.2.4</ecNumber>
    </recommendedName>
    <alternativeName>
        <fullName evidence="1">TdRPase</fullName>
    </alternativeName>
</protein>
<comment type="function">
    <text evidence="1">The enzymes which catalyze the reversible phosphorolysis of pyrimidine nucleosides are involved in the degradation of these compounds and in their utilization as carbon and energy sources, or in the rescue of pyrimidine bases for nucleotide synthesis.</text>
</comment>
<comment type="catalytic activity">
    <reaction evidence="1">
        <text>thymidine + phosphate = 2-deoxy-alpha-D-ribose 1-phosphate + thymine</text>
        <dbReference type="Rhea" id="RHEA:16037"/>
        <dbReference type="ChEBI" id="CHEBI:17748"/>
        <dbReference type="ChEBI" id="CHEBI:17821"/>
        <dbReference type="ChEBI" id="CHEBI:43474"/>
        <dbReference type="ChEBI" id="CHEBI:57259"/>
        <dbReference type="EC" id="2.4.2.4"/>
    </reaction>
</comment>
<comment type="pathway">
    <text evidence="1">Pyrimidine metabolism; dTMP biosynthesis via salvage pathway; dTMP from thymine: step 1/2.</text>
</comment>
<comment type="subunit">
    <text evidence="1">Homodimer.</text>
</comment>
<comment type="similarity">
    <text evidence="1">Belongs to the thymidine/pyrimidine-nucleoside phosphorylase family.</text>
</comment>
<evidence type="ECO:0000255" key="1">
    <source>
        <dbReference type="HAMAP-Rule" id="MF_01628"/>
    </source>
</evidence>
<keyword id="KW-0328">Glycosyltransferase</keyword>
<keyword id="KW-0808">Transferase</keyword>
<organism>
    <name type="scientific">Shewanella sp. (strain MR-4)</name>
    <dbReference type="NCBI Taxonomy" id="60480"/>
    <lineage>
        <taxon>Bacteria</taxon>
        <taxon>Pseudomonadati</taxon>
        <taxon>Pseudomonadota</taxon>
        <taxon>Gammaproteobacteria</taxon>
        <taxon>Alteromonadales</taxon>
        <taxon>Shewanellaceae</taxon>
        <taxon>Shewanella</taxon>
    </lineage>
</organism>
<accession>Q0HLE9</accession>
<name>TYPH_SHESM</name>
<dbReference type="EC" id="2.4.2.4" evidence="1"/>
<dbReference type="EMBL" id="CP000446">
    <property type="protein sequence ID" value="ABI38118.1"/>
    <property type="molecule type" value="Genomic_DNA"/>
</dbReference>
<dbReference type="RefSeq" id="WP_011621829.1">
    <property type="nucleotide sequence ID" value="NC_008321.1"/>
</dbReference>
<dbReference type="SMR" id="Q0HLE9"/>
<dbReference type="KEGG" id="she:Shewmr4_1038"/>
<dbReference type="HOGENOM" id="CLU_025040_0_1_6"/>
<dbReference type="UniPathway" id="UPA00578">
    <property type="reaction ID" value="UER00638"/>
</dbReference>
<dbReference type="GO" id="GO:0005829">
    <property type="term" value="C:cytosol"/>
    <property type="evidence" value="ECO:0007669"/>
    <property type="project" value="TreeGrafter"/>
</dbReference>
<dbReference type="GO" id="GO:0004645">
    <property type="term" value="F:1,4-alpha-oligoglucan phosphorylase activity"/>
    <property type="evidence" value="ECO:0007669"/>
    <property type="project" value="InterPro"/>
</dbReference>
<dbReference type="GO" id="GO:0009032">
    <property type="term" value="F:thymidine phosphorylase activity"/>
    <property type="evidence" value="ECO:0007669"/>
    <property type="project" value="UniProtKB-UniRule"/>
</dbReference>
<dbReference type="GO" id="GO:0006206">
    <property type="term" value="P:pyrimidine nucleobase metabolic process"/>
    <property type="evidence" value="ECO:0007669"/>
    <property type="project" value="InterPro"/>
</dbReference>
<dbReference type="GO" id="GO:0046104">
    <property type="term" value="P:thymidine metabolic process"/>
    <property type="evidence" value="ECO:0007669"/>
    <property type="project" value="UniProtKB-UniRule"/>
</dbReference>
<dbReference type="FunFam" id="3.40.1030.10:FF:000001">
    <property type="entry name" value="Thymidine phosphorylase"/>
    <property type="match status" value="1"/>
</dbReference>
<dbReference type="FunFam" id="3.90.1170.30:FF:000001">
    <property type="entry name" value="Thymidine phosphorylase"/>
    <property type="match status" value="1"/>
</dbReference>
<dbReference type="Gene3D" id="3.40.1030.10">
    <property type="entry name" value="Nucleoside phosphorylase/phosphoribosyltransferase catalytic domain"/>
    <property type="match status" value="1"/>
</dbReference>
<dbReference type="Gene3D" id="3.90.1170.30">
    <property type="entry name" value="Pyrimidine nucleoside phosphorylase-like, C-terminal domain"/>
    <property type="match status" value="1"/>
</dbReference>
<dbReference type="Gene3D" id="1.20.970.10">
    <property type="entry name" value="Transferase, Pyrimidine Nucleoside Phosphorylase, Chain C"/>
    <property type="match status" value="1"/>
</dbReference>
<dbReference type="HAMAP" id="MF_01628">
    <property type="entry name" value="Thymid_phosp"/>
    <property type="match status" value="1"/>
</dbReference>
<dbReference type="InterPro" id="IPR000312">
    <property type="entry name" value="Glycosyl_Trfase_fam3"/>
</dbReference>
<dbReference type="InterPro" id="IPR017459">
    <property type="entry name" value="Glycosyl_Trfase_fam3_N_dom"/>
</dbReference>
<dbReference type="InterPro" id="IPR036320">
    <property type="entry name" value="Glycosyl_Trfase_fam3_N_dom_sf"/>
</dbReference>
<dbReference type="InterPro" id="IPR035902">
    <property type="entry name" value="Nuc_phospho_transferase"/>
</dbReference>
<dbReference type="InterPro" id="IPR036566">
    <property type="entry name" value="PYNP-like_C_sf"/>
</dbReference>
<dbReference type="InterPro" id="IPR013102">
    <property type="entry name" value="PYNP_C"/>
</dbReference>
<dbReference type="InterPro" id="IPR018090">
    <property type="entry name" value="Pyrmidine_PPas_bac/euk"/>
</dbReference>
<dbReference type="InterPro" id="IPR017872">
    <property type="entry name" value="Pyrmidine_PPase_CS"/>
</dbReference>
<dbReference type="InterPro" id="IPR000053">
    <property type="entry name" value="Thymidine/pyrmidine_PPase"/>
</dbReference>
<dbReference type="InterPro" id="IPR013465">
    <property type="entry name" value="Thymidine_Pase"/>
</dbReference>
<dbReference type="NCBIfam" id="NF004490">
    <property type="entry name" value="PRK05820.1"/>
    <property type="match status" value="1"/>
</dbReference>
<dbReference type="NCBIfam" id="TIGR02643">
    <property type="entry name" value="T_phosphoryl"/>
    <property type="match status" value="1"/>
</dbReference>
<dbReference type="NCBIfam" id="TIGR02644">
    <property type="entry name" value="Y_phosphoryl"/>
    <property type="match status" value="1"/>
</dbReference>
<dbReference type="PANTHER" id="PTHR10515">
    <property type="entry name" value="THYMIDINE PHOSPHORYLASE"/>
    <property type="match status" value="1"/>
</dbReference>
<dbReference type="PANTHER" id="PTHR10515:SF0">
    <property type="entry name" value="THYMIDINE PHOSPHORYLASE"/>
    <property type="match status" value="1"/>
</dbReference>
<dbReference type="Pfam" id="PF02885">
    <property type="entry name" value="Glycos_trans_3N"/>
    <property type="match status" value="1"/>
</dbReference>
<dbReference type="Pfam" id="PF00591">
    <property type="entry name" value="Glycos_transf_3"/>
    <property type="match status" value="1"/>
</dbReference>
<dbReference type="Pfam" id="PF07831">
    <property type="entry name" value="PYNP_C"/>
    <property type="match status" value="1"/>
</dbReference>
<dbReference type="PIRSF" id="PIRSF000478">
    <property type="entry name" value="TP_PyNP"/>
    <property type="match status" value="1"/>
</dbReference>
<dbReference type="SMART" id="SM00941">
    <property type="entry name" value="PYNP_C"/>
    <property type="match status" value="1"/>
</dbReference>
<dbReference type="SUPFAM" id="SSF52418">
    <property type="entry name" value="Nucleoside phosphorylase/phosphoribosyltransferase catalytic domain"/>
    <property type="match status" value="1"/>
</dbReference>
<dbReference type="SUPFAM" id="SSF47648">
    <property type="entry name" value="Nucleoside phosphorylase/phosphoribosyltransferase N-terminal domain"/>
    <property type="match status" value="1"/>
</dbReference>
<dbReference type="SUPFAM" id="SSF54680">
    <property type="entry name" value="Pyrimidine nucleoside phosphorylase C-terminal domain"/>
    <property type="match status" value="1"/>
</dbReference>
<dbReference type="PROSITE" id="PS00647">
    <property type="entry name" value="THYMID_PHOSPHORYLASE"/>
    <property type="match status" value="1"/>
</dbReference>